<dbReference type="EC" id="2.7.-.-" evidence="1"/>
<dbReference type="EMBL" id="AK096919">
    <property type="protein sequence ID" value="BAG53397.1"/>
    <property type="molecule type" value="mRNA"/>
</dbReference>
<dbReference type="EMBL" id="AC008372">
    <property type="protein sequence ID" value="AAF23326.1"/>
    <property type="molecule type" value="Genomic_DNA"/>
</dbReference>
<dbReference type="EMBL" id="CH471061">
    <property type="protein sequence ID" value="EAW81310.1"/>
    <property type="molecule type" value="Genomic_DNA"/>
</dbReference>
<dbReference type="EMBL" id="BC058906">
    <property type="protein sequence ID" value="AAH58906.1"/>
    <property type="molecule type" value="mRNA"/>
</dbReference>
<dbReference type="EMBL" id="BX248292">
    <property type="protein sequence ID" value="CAD62620.1"/>
    <property type="status" value="ALT_SEQ"/>
    <property type="molecule type" value="mRNA"/>
</dbReference>
<dbReference type="CCDS" id="CCDS45144.1">
    <molecule id="Q86TW2-3"/>
</dbReference>
<dbReference type="CCDS" id="CCDS9869.1">
    <molecule id="Q86TW2-2"/>
</dbReference>
<dbReference type="RefSeq" id="NP_001136017.1">
    <molecule id="Q86TW2-3"/>
    <property type="nucleotide sequence ID" value="NM_001142545.2"/>
</dbReference>
<dbReference type="RefSeq" id="NP_065154.2">
    <molecule id="Q86TW2-2"/>
    <property type="nucleotide sequence ID" value="NM_020421.3"/>
</dbReference>
<dbReference type="SMR" id="Q86TW2"/>
<dbReference type="BioGRID" id="121401">
    <property type="interactions" value="79"/>
</dbReference>
<dbReference type="FunCoup" id="Q86TW2">
    <property type="interactions" value="1077"/>
</dbReference>
<dbReference type="IntAct" id="Q86TW2">
    <property type="interactions" value="71"/>
</dbReference>
<dbReference type="STRING" id="9606.ENSP00000238561"/>
<dbReference type="ChEMBL" id="CHEMBL4105885"/>
<dbReference type="DrugCentral" id="Q86TW2"/>
<dbReference type="GlyGen" id="Q86TW2">
    <property type="glycosylation" value="1 site, 1 N-linked glycan (1 site)"/>
</dbReference>
<dbReference type="iPTMnet" id="Q86TW2"/>
<dbReference type="PhosphoSitePlus" id="Q86TW2"/>
<dbReference type="SwissPalm" id="Q86TW2"/>
<dbReference type="BioMuta" id="ADCK1"/>
<dbReference type="DMDM" id="115503784"/>
<dbReference type="CPTAC" id="non-CPTAC-6012"/>
<dbReference type="CPTAC" id="non-CPTAC-6013"/>
<dbReference type="jPOST" id="Q86TW2"/>
<dbReference type="MassIVE" id="Q86TW2"/>
<dbReference type="PaxDb" id="9606-ENSP00000238561"/>
<dbReference type="PeptideAtlas" id="Q86TW2"/>
<dbReference type="ProteomicsDB" id="69740">
    <molecule id="Q86TW2-1"/>
</dbReference>
<dbReference type="ProteomicsDB" id="69741">
    <molecule id="Q86TW2-2"/>
</dbReference>
<dbReference type="ProteomicsDB" id="84498"/>
<dbReference type="Pumba" id="Q86TW2"/>
<dbReference type="Antibodypedia" id="26131">
    <property type="antibodies" value="181 antibodies from 28 providers"/>
</dbReference>
<dbReference type="DNASU" id="57143"/>
<dbReference type="Ensembl" id="ENST00000238561.10">
    <molecule id="Q86TW2-2"/>
    <property type="protein sequence ID" value="ENSP00000238561.5"/>
    <property type="gene ID" value="ENSG00000063761.16"/>
</dbReference>
<dbReference type="Ensembl" id="ENST00000341211.5">
    <molecule id="Q86TW2-3"/>
    <property type="protein sequence ID" value="ENSP00000339663.5"/>
    <property type="gene ID" value="ENSG00000063761.16"/>
</dbReference>
<dbReference type="GeneID" id="57143"/>
<dbReference type="KEGG" id="hsa:57143"/>
<dbReference type="MANE-Select" id="ENST00000238561.10">
    <molecule id="Q86TW2-2"/>
    <property type="protein sequence ID" value="ENSP00000238561.5"/>
    <property type="RefSeq nucleotide sequence ID" value="NM_020421.4"/>
    <property type="RefSeq protein sequence ID" value="NP_065154.2"/>
</dbReference>
<dbReference type="UCSC" id="uc001xui.3">
    <molecule id="Q86TW2-1"/>
    <property type="organism name" value="human"/>
</dbReference>
<dbReference type="AGR" id="HGNC:19038"/>
<dbReference type="CTD" id="57143"/>
<dbReference type="DisGeNET" id="57143"/>
<dbReference type="GeneCards" id="ADCK1"/>
<dbReference type="HGNC" id="HGNC:19038">
    <property type="gene designation" value="ADCK1"/>
</dbReference>
<dbReference type="HPA" id="ENSG00000063761">
    <property type="expression patterns" value="Low tissue specificity"/>
</dbReference>
<dbReference type="MIM" id="620399">
    <property type="type" value="gene"/>
</dbReference>
<dbReference type="neXtProt" id="NX_Q86TW2"/>
<dbReference type="OpenTargets" id="ENSG00000063761"/>
<dbReference type="PharmGKB" id="PA134861355"/>
<dbReference type="VEuPathDB" id="HostDB:ENSG00000063761"/>
<dbReference type="eggNOG" id="KOG1235">
    <property type="taxonomic scope" value="Eukaryota"/>
</dbReference>
<dbReference type="GeneTree" id="ENSGT00940000158221"/>
<dbReference type="HOGENOM" id="CLU_006533_2_0_1"/>
<dbReference type="InParanoid" id="Q86TW2"/>
<dbReference type="OMA" id="RCNPEDI"/>
<dbReference type="OrthoDB" id="427480at2759"/>
<dbReference type="PAN-GO" id="Q86TW2">
    <property type="GO annotations" value="4 GO annotations based on evolutionary models"/>
</dbReference>
<dbReference type="PhylomeDB" id="Q86TW2"/>
<dbReference type="TreeFam" id="TF314889"/>
<dbReference type="PathwayCommons" id="Q86TW2"/>
<dbReference type="SignaLink" id="Q86TW2"/>
<dbReference type="BioGRID-ORCS" id="57143">
    <property type="hits" value="12 hits in 1189 CRISPR screens"/>
</dbReference>
<dbReference type="ChiTaRS" id="ADCK1">
    <property type="organism name" value="human"/>
</dbReference>
<dbReference type="GenomeRNAi" id="57143"/>
<dbReference type="Pharos" id="Q86TW2">
    <property type="development level" value="Tchem"/>
</dbReference>
<dbReference type="PRO" id="PR:Q86TW2"/>
<dbReference type="Proteomes" id="UP000005640">
    <property type="component" value="Chromosome 14"/>
</dbReference>
<dbReference type="RNAct" id="Q86TW2">
    <property type="molecule type" value="protein"/>
</dbReference>
<dbReference type="Bgee" id="ENSG00000063761">
    <property type="expression patterns" value="Expressed in apex of heart and 179 other cell types or tissues"/>
</dbReference>
<dbReference type="ExpressionAtlas" id="Q86TW2">
    <property type="expression patterns" value="baseline and differential"/>
</dbReference>
<dbReference type="GO" id="GO:0005743">
    <property type="term" value="C:mitochondrial inner membrane"/>
    <property type="evidence" value="ECO:0000318"/>
    <property type="project" value="GO_Central"/>
</dbReference>
<dbReference type="GO" id="GO:0005739">
    <property type="term" value="C:mitochondrion"/>
    <property type="evidence" value="ECO:0000314"/>
    <property type="project" value="UniProtKB"/>
</dbReference>
<dbReference type="GO" id="GO:0005524">
    <property type="term" value="F:ATP binding"/>
    <property type="evidence" value="ECO:0007669"/>
    <property type="project" value="UniProtKB-KW"/>
</dbReference>
<dbReference type="GO" id="GO:0004674">
    <property type="term" value="F:protein serine/threonine kinase activity"/>
    <property type="evidence" value="ECO:0007669"/>
    <property type="project" value="UniProtKB-KW"/>
</dbReference>
<dbReference type="GO" id="GO:0055088">
    <property type="term" value="P:lipid homeostasis"/>
    <property type="evidence" value="ECO:0000318"/>
    <property type="project" value="GO_Central"/>
</dbReference>
<dbReference type="GO" id="GO:0007005">
    <property type="term" value="P:mitochondrion organization"/>
    <property type="evidence" value="ECO:0000318"/>
    <property type="project" value="GO_Central"/>
</dbReference>
<dbReference type="GO" id="GO:0010637">
    <property type="term" value="P:negative regulation of mitochondrial fusion"/>
    <property type="evidence" value="ECO:0000315"/>
    <property type="project" value="UniProtKB"/>
</dbReference>
<dbReference type="GO" id="GO:1903852">
    <property type="term" value="P:positive regulation of cristae formation"/>
    <property type="evidence" value="ECO:0000315"/>
    <property type="project" value="UniProtKB"/>
</dbReference>
<dbReference type="CDD" id="cd13969">
    <property type="entry name" value="ADCK1-like"/>
    <property type="match status" value="1"/>
</dbReference>
<dbReference type="Gene3D" id="1.10.510.10">
    <property type="entry name" value="Transferase(Phosphotransferase) domain 1"/>
    <property type="match status" value="1"/>
</dbReference>
<dbReference type="InterPro" id="IPR004147">
    <property type="entry name" value="ABC1_dom"/>
</dbReference>
<dbReference type="InterPro" id="IPR045307">
    <property type="entry name" value="ADCK1_dom"/>
</dbReference>
<dbReference type="InterPro" id="IPR011009">
    <property type="entry name" value="Kinase-like_dom_sf"/>
</dbReference>
<dbReference type="InterPro" id="IPR051130">
    <property type="entry name" value="Mito_struct-func_regulator"/>
</dbReference>
<dbReference type="PANTHER" id="PTHR43173:SF19">
    <property type="entry name" value="AARF DOMAIN-CONTAINING PROTEIN KINASE 1"/>
    <property type="match status" value="1"/>
</dbReference>
<dbReference type="PANTHER" id="PTHR43173">
    <property type="entry name" value="ABC1 FAMILY PROTEIN"/>
    <property type="match status" value="1"/>
</dbReference>
<dbReference type="Pfam" id="PF03109">
    <property type="entry name" value="ABC1"/>
    <property type="match status" value="1"/>
</dbReference>
<dbReference type="SUPFAM" id="SSF56112">
    <property type="entry name" value="Protein kinase-like (PK-like)"/>
    <property type="match status" value="1"/>
</dbReference>
<organism>
    <name type="scientific">Homo sapiens</name>
    <name type="common">Human</name>
    <dbReference type="NCBI Taxonomy" id="9606"/>
    <lineage>
        <taxon>Eukaryota</taxon>
        <taxon>Metazoa</taxon>
        <taxon>Chordata</taxon>
        <taxon>Craniata</taxon>
        <taxon>Vertebrata</taxon>
        <taxon>Euteleostomi</taxon>
        <taxon>Mammalia</taxon>
        <taxon>Eutheria</taxon>
        <taxon>Euarchontoglires</taxon>
        <taxon>Primates</taxon>
        <taxon>Haplorrhini</taxon>
        <taxon>Catarrhini</taxon>
        <taxon>Hominidae</taxon>
        <taxon>Homo</taxon>
    </lineage>
</organism>
<sequence length="530" mass="60577">MARKALKLASWTSMALAASGIYFYSNKYLDPNDFGAVRVGRAVATTAVISYDYLTSLKSVPYGSEEYLQLRSKSWPVFLQVHLRSARRLCELCCANRGTFIKVGQHLGALDYLLPEEYTSTLKVLHSQAPQSSMQEIRQVIREDLGKEIHDLFQSFDDTPLGTASLAQVHKAVLHDGRTVAVKVQHPKVRAQSSKDILLMEVLVLAVKQLFPEFEFMWLVDEAKKNLPLELDFLNEGRNAEKVSQMLRHFDFLKVPRIHWDLSTERVLLMEFVDGGQVNDRDYMERNKIDVNEISRHLGKMYSEMIFVNGFVHCDPHPGNVLVRKHPGTGKAEIVLLDHGLYQMLTEEFRLNYCHLWQSLIWTDMKRVKEYSQRLGAGDLYPLFACMLTARSWDSVNRGISQAPVTATEDLEIRNNAANYLPQISHLLNHVPRQMLLILKTNDLLRGIEAALGTRASASSFLNMSRCCIRALAEHKKKNTCSFFRRTQISFSEAFNLWQINLHELILRVKGLKLADRVLALICWLFPAPL</sequence>
<feature type="transit peptide" description="Mitochondrion" evidence="7">
    <location>
        <begin position="1"/>
        <end status="unknown"/>
    </location>
</feature>
<feature type="chain" id="PRO_0000252249" description="AarF domain-containing protein kinase 1">
    <location>
        <begin status="unknown"/>
        <end position="530"/>
    </location>
</feature>
<feature type="domain" description="Protein kinase" evidence="1">
    <location>
        <begin position="155"/>
        <end position="467"/>
    </location>
</feature>
<feature type="active site" description="Proton acceptor" evidence="1">
    <location>
        <position position="315"/>
    </location>
</feature>
<feature type="binding site" evidence="1">
    <location>
        <begin position="161"/>
        <end position="169"/>
    </location>
    <ligand>
        <name>ATP</name>
        <dbReference type="ChEBI" id="CHEBI:30616"/>
    </ligand>
</feature>
<feature type="binding site" evidence="1">
    <location>
        <position position="183"/>
    </location>
    <ligand>
        <name>ATP</name>
        <dbReference type="ChEBI" id="CHEBI:30616"/>
    </ligand>
</feature>
<feature type="splice variant" id="VSP_046794" description="In isoform 3." evidence="4">
    <location>
        <begin position="74"/>
        <end position="148"/>
    </location>
</feature>
<feature type="splice variant" id="VSP_020885" description="In isoform 2." evidence="5">
    <location>
        <begin position="74"/>
        <end position="80"/>
    </location>
</feature>
<feature type="mutagenesis site" description="No effect on role in maintaining mitochondrial structure and function." evidence="2">
    <original>A</original>
    <variation>G</variation>
    <location>
        <position position="164"/>
    </location>
</feature>
<feature type="mutagenesis site" description="No effect on role in maintaining mitochondrial structure and function." evidence="2">
    <original>K</original>
    <variation>I</variation>
    <location>
        <position position="183"/>
    </location>
</feature>
<feature type="mutagenesis site" description="No effect on role in maintaining mitochondrial structure and function." evidence="2">
    <original>D</original>
    <variation>A</variation>
    <location>
        <position position="315"/>
    </location>
</feature>
<feature type="sequence conflict" description="In Ref. 1; BAG53397." evidence="7" ref="1">
    <original>K</original>
    <variation>N</variation>
    <location>
        <position position="7"/>
    </location>
</feature>
<proteinExistence type="evidence at protein level"/>
<protein>
    <recommendedName>
        <fullName evidence="6">AarF domain-containing protein kinase 1</fullName>
        <ecNumber evidence="1">2.7.-.-</ecNumber>
    </recommendedName>
</protein>
<gene>
    <name evidence="6" type="primary">ADCK1</name>
</gene>
<name>ADCK1_HUMAN</name>
<keyword id="KW-0025">Alternative splicing</keyword>
<keyword id="KW-0067">ATP-binding</keyword>
<keyword id="KW-0418">Kinase</keyword>
<keyword id="KW-0496">Mitochondrion</keyword>
<keyword id="KW-0547">Nucleotide-binding</keyword>
<keyword id="KW-1267">Proteomics identification</keyword>
<keyword id="KW-1185">Reference proteome</keyword>
<keyword id="KW-0723">Serine/threonine-protein kinase</keyword>
<keyword id="KW-0808">Transferase</keyword>
<keyword id="KW-0809">Transit peptide</keyword>
<reference key="1">
    <citation type="journal article" date="2004" name="Nat. Genet.">
        <title>Complete sequencing and characterization of 21,243 full-length human cDNAs.</title>
        <authorList>
            <person name="Ota T."/>
            <person name="Suzuki Y."/>
            <person name="Nishikawa T."/>
            <person name="Otsuki T."/>
            <person name="Sugiyama T."/>
            <person name="Irie R."/>
            <person name="Wakamatsu A."/>
            <person name="Hayashi K."/>
            <person name="Sato H."/>
            <person name="Nagai K."/>
            <person name="Kimura K."/>
            <person name="Makita H."/>
            <person name="Sekine M."/>
            <person name="Obayashi M."/>
            <person name="Nishi T."/>
            <person name="Shibahara T."/>
            <person name="Tanaka T."/>
            <person name="Ishii S."/>
            <person name="Yamamoto J."/>
            <person name="Saito K."/>
            <person name="Kawai Y."/>
            <person name="Isono Y."/>
            <person name="Nakamura Y."/>
            <person name="Nagahari K."/>
            <person name="Murakami K."/>
            <person name="Yasuda T."/>
            <person name="Iwayanagi T."/>
            <person name="Wagatsuma M."/>
            <person name="Shiratori A."/>
            <person name="Sudo H."/>
            <person name="Hosoiri T."/>
            <person name="Kaku Y."/>
            <person name="Kodaira H."/>
            <person name="Kondo H."/>
            <person name="Sugawara M."/>
            <person name="Takahashi M."/>
            <person name="Kanda K."/>
            <person name="Yokoi T."/>
            <person name="Furuya T."/>
            <person name="Kikkawa E."/>
            <person name="Omura Y."/>
            <person name="Abe K."/>
            <person name="Kamihara K."/>
            <person name="Katsuta N."/>
            <person name="Sato K."/>
            <person name="Tanikawa M."/>
            <person name="Yamazaki M."/>
            <person name="Ninomiya K."/>
            <person name="Ishibashi T."/>
            <person name="Yamashita H."/>
            <person name="Murakawa K."/>
            <person name="Fujimori K."/>
            <person name="Tanai H."/>
            <person name="Kimata M."/>
            <person name="Watanabe M."/>
            <person name="Hiraoka S."/>
            <person name="Chiba Y."/>
            <person name="Ishida S."/>
            <person name="Ono Y."/>
            <person name="Takiguchi S."/>
            <person name="Watanabe S."/>
            <person name="Yosida M."/>
            <person name="Hotuta T."/>
            <person name="Kusano J."/>
            <person name="Kanehori K."/>
            <person name="Takahashi-Fujii A."/>
            <person name="Hara H."/>
            <person name="Tanase T.-O."/>
            <person name="Nomura Y."/>
            <person name="Togiya S."/>
            <person name="Komai F."/>
            <person name="Hara R."/>
            <person name="Takeuchi K."/>
            <person name="Arita M."/>
            <person name="Imose N."/>
            <person name="Musashino K."/>
            <person name="Yuuki H."/>
            <person name="Oshima A."/>
            <person name="Sasaki N."/>
            <person name="Aotsuka S."/>
            <person name="Yoshikawa Y."/>
            <person name="Matsunawa H."/>
            <person name="Ichihara T."/>
            <person name="Shiohata N."/>
            <person name="Sano S."/>
            <person name="Moriya S."/>
            <person name="Momiyama H."/>
            <person name="Satoh N."/>
            <person name="Takami S."/>
            <person name="Terashima Y."/>
            <person name="Suzuki O."/>
            <person name="Nakagawa S."/>
            <person name="Senoh A."/>
            <person name="Mizoguchi H."/>
            <person name="Goto Y."/>
            <person name="Shimizu F."/>
            <person name="Wakebe H."/>
            <person name="Hishigaki H."/>
            <person name="Watanabe T."/>
            <person name="Sugiyama A."/>
            <person name="Takemoto M."/>
            <person name="Kawakami B."/>
            <person name="Yamazaki M."/>
            <person name="Watanabe K."/>
            <person name="Kumagai A."/>
            <person name="Itakura S."/>
            <person name="Fukuzumi Y."/>
            <person name="Fujimori Y."/>
            <person name="Komiyama M."/>
            <person name="Tashiro H."/>
            <person name="Tanigami A."/>
            <person name="Fujiwara T."/>
            <person name="Ono T."/>
            <person name="Yamada K."/>
            <person name="Fujii Y."/>
            <person name="Ozaki K."/>
            <person name="Hirao M."/>
            <person name="Ohmori Y."/>
            <person name="Kawabata A."/>
            <person name="Hikiji T."/>
            <person name="Kobatake N."/>
            <person name="Inagaki H."/>
            <person name="Ikema Y."/>
            <person name="Okamoto S."/>
            <person name="Okitani R."/>
            <person name="Kawakami T."/>
            <person name="Noguchi S."/>
            <person name="Itoh T."/>
            <person name="Shigeta K."/>
            <person name="Senba T."/>
            <person name="Matsumura K."/>
            <person name="Nakajima Y."/>
            <person name="Mizuno T."/>
            <person name="Morinaga M."/>
            <person name="Sasaki M."/>
            <person name="Togashi T."/>
            <person name="Oyama M."/>
            <person name="Hata H."/>
            <person name="Watanabe M."/>
            <person name="Komatsu T."/>
            <person name="Mizushima-Sugano J."/>
            <person name="Satoh T."/>
            <person name="Shirai Y."/>
            <person name="Takahashi Y."/>
            <person name="Nakagawa K."/>
            <person name="Okumura K."/>
            <person name="Nagase T."/>
            <person name="Nomura N."/>
            <person name="Kikuchi H."/>
            <person name="Masuho Y."/>
            <person name="Yamashita R."/>
            <person name="Nakai K."/>
            <person name="Yada T."/>
            <person name="Nakamura Y."/>
            <person name="Ohara O."/>
            <person name="Isogai T."/>
            <person name="Sugano S."/>
        </authorList>
    </citation>
    <scope>NUCLEOTIDE SEQUENCE [LARGE SCALE MRNA] (ISOFORM 3)</scope>
</reference>
<reference key="2">
    <citation type="journal article" date="2003" name="Nature">
        <title>The DNA sequence and analysis of human chromosome 14.</title>
        <authorList>
            <person name="Heilig R."/>
            <person name="Eckenberg R."/>
            <person name="Petit J.-L."/>
            <person name="Fonknechten N."/>
            <person name="Da Silva C."/>
            <person name="Cattolico L."/>
            <person name="Levy M."/>
            <person name="Barbe V."/>
            <person name="De Berardinis V."/>
            <person name="Ureta-Vidal A."/>
            <person name="Pelletier E."/>
            <person name="Vico V."/>
            <person name="Anthouard V."/>
            <person name="Rowen L."/>
            <person name="Madan A."/>
            <person name="Qin S."/>
            <person name="Sun H."/>
            <person name="Du H."/>
            <person name="Pepin K."/>
            <person name="Artiguenave F."/>
            <person name="Robert C."/>
            <person name="Cruaud C."/>
            <person name="Bruels T."/>
            <person name="Jaillon O."/>
            <person name="Friedlander L."/>
            <person name="Samson G."/>
            <person name="Brottier P."/>
            <person name="Cure S."/>
            <person name="Segurens B."/>
            <person name="Aniere F."/>
            <person name="Samain S."/>
            <person name="Crespeau H."/>
            <person name="Abbasi N."/>
            <person name="Aiach N."/>
            <person name="Boscus D."/>
            <person name="Dickhoff R."/>
            <person name="Dors M."/>
            <person name="Dubois I."/>
            <person name="Friedman C."/>
            <person name="Gouyvenoux M."/>
            <person name="James R."/>
            <person name="Madan A."/>
            <person name="Mairey-Estrada B."/>
            <person name="Mangenot S."/>
            <person name="Martins N."/>
            <person name="Menard M."/>
            <person name="Oztas S."/>
            <person name="Ratcliffe A."/>
            <person name="Shaffer T."/>
            <person name="Trask B."/>
            <person name="Vacherie B."/>
            <person name="Bellemere C."/>
            <person name="Belser C."/>
            <person name="Besnard-Gonnet M."/>
            <person name="Bartol-Mavel D."/>
            <person name="Boutard M."/>
            <person name="Briez-Silla S."/>
            <person name="Combette S."/>
            <person name="Dufosse-Laurent V."/>
            <person name="Ferron C."/>
            <person name="Lechaplais C."/>
            <person name="Louesse C."/>
            <person name="Muselet D."/>
            <person name="Magdelenat G."/>
            <person name="Pateau E."/>
            <person name="Petit E."/>
            <person name="Sirvain-Trukniewicz P."/>
            <person name="Trybou A."/>
            <person name="Vega-Czarny N."/>
            <person name="Bataille E."/>
            <person name="Bluet E."/>
            <person name="Bordelais I."/>
            <person name="Dubois M."/>
            <person name="Dumont C."/>
            <person name="Guerin T."/>
            <person name="Haffray S."/>
            <person name="Hammadi R."/>
            <person name="Muanga J."/>
            <person name="Pellouin V."/>
            <person name="Robert D."/>
            <person name="Wunderle E."/>
            <person name="Gauguet G."/>
            <person name="Roy A."/>
            <person name="Sainte-Marthe L."/>
            <person name="Verdier J."/>
            <person name="Verdier-Discala C."/>
            <person name="Hillier L.W."/>
            <person name="Fulton L."/>
            <person name="McPherson J."/>
            <person name="Matsuda F."/>
            <person name="Wilson R."/>
            <person name="Scarpelli C."/>
            <person name="Gyapay G."/>
            <person name="Wincker P."/>
            <person name="Saurin W."/>
            <person name="Quetier F."/>
            <person name="Waterston R."/>
            <person name="Hood L."/>
            <person name="Weissenbach J."/>
        </authorList>
    </citation>
    <scope>NUCLEOTIDE SEQUENCE [LARGE SCALE GENOMIC DNA]</scope>
</reference>
<reference key="3">
    <citation type="submission" date="2005-07" db="EMBL/GenBank/DDBJ databases">
        <authorList>
            <person name="Mural R.J."/>
            <person name="Istrail S."/>
            <person name="Sutton G.G."/>
            <person name="Florea L."/>
            <person name="Halpern A.L."/>
            <person name="Mobarry C.M."/>
            <person name="Lippert R."/>
            <person name="Walenz B."/>
            <person name="Shatkay H."/>
            <person name="Dew I."/>
            <person name="Miller J.R."/>
            <person name="Flanigan M.J."/>
            <person name="Edwards N.J."/>
            <person name="Bolanos R."/>
            <person name="Fasulo D."/>
            <person name="Halldorsson B.V."/>
            <person name="Hannenhalli S."/>
            <person name="Turner R."/>
            <person name="Yooseph S."/>
            <person name="Lu F."/>
            <person name="Nusskern D.R."/>
            <person name="Shue B.C."/>
            <person name="Zheng X.H."/>
            <person name="Zhong F."/>
            <person name="Delcher A.L."/>
            <person name="Huson D.H."/>
            <person name="Kravitz S.A."/>
            <person name="Mouchard L."/>
            <person name="Reinert K."/>
            <person name="Remington K.A."/>
            <person name="Clark A.G."/>
            <person name="Waterman M.S."/>
            <person name="Eichler E.E."/>
            <person name="Adams M.D."/>
            <person name="Hunkapiller M.W."/>
            <person name="Myers E.W."/>
            <person name="Venter J.C."/>
        </authorList>
    </citation>
    <scope>NUCLEOTIDE SEQUENCE [LARGE SCALE GENOMIC DNA]</scope>
</reference>
<reference key="4">
    <citation type="journal article" date="2004" name="Genome Res.">
        <title>The status, quality, and expansion of the NIH full-length cDNA project: the Mammalian Gene Collection (MGC).</title>
        <authorList>
            <consortium name="The MGC Project Team"/>
        </authorList>
    </citation>
    <scope>NUCLEOTIDE SEQUENCE [LARGE SCALE MRNA] (ISOFORM 2)</scope>
    <source>
        <tissue>Skin</tissue>
    </source>
</reference>
<reference key="5">
    <citation type="submission" date="2003-02" db="EMBL/GenBank/DDBJ databases">
        <title>Full-length cDNA libraries and normalization.</title>
        <authorList>
            <person name="Li W.B."/>
            <person name="Gruber C."/>
            <person name="Jessee J."/>
            <person name="Polayes D."/>
        </authorList>
    </citation>
    <scope>NUCLEOTIDE SEQUENCE [LARGE SCALE MRNA] OF 1-93 (ISOFORM 1)</scope>
    <source>
        <tissue>Placenta</tissue>
    </source>
</reference>
<reference key="6">
    <citation type="journal article" date="2019" name="PLoS Genet.">
        <title>Drosophila ADCK1 is critical for maintaining mitochondrial structures and functions in the muscle.</title>
        <authorList>
            <person name="Yoon W."/>
            <person name="Hwang S.H."/>
            <person name="Lee S.H."/>
            <person name="Chung J."/>
        </authorList>
    </citation>
    <scope>FUNCTION</scope>
    <scope>MUTAGENESIS OF ALA-164; LYS-183 AND ASP-315</scope>
</reference>
<reference key="7">
    <citation type="journal article" date="2021" name="Elife">
        <title>A subcellular map of the human kinome.</title>
        <authorList>
            <person name="Zhang H."/>
            <person name="Cao X."/>
            <person name="Tang M."/>
            <person name="Zhong G."/>
            <person name="Si Y."/>
            <person name="Li H."/>
            <person name="Zhu F."/>
            <person name="Liao Q."/>
            <person name="Li L."/>
            <person name="Zhao J."/>
            <person name="Feng J."/>
            <person name="Li S."/>
            <person name="Wang C."/>
            <person name="Kaulich M."/>
            <person name="Wang F."/>
            <person name="Chen L."/>
            <person name="Li L."/>
            <person name="Xia Z."/>
            <person name="Liang T."/>
            <person name="Lu H."/>
            <person name="Feng X.H."/>
            <person name="Zhao B."/>
        </authorList>
    </citation>
    <scope>SUBCELLULAR LOCATION</scope>
</reference>
<evidence type="ECO:0000255" key="1">
    <source>
        <dbReference type="PROSITE-ProRule" id="PRU00159"/>
    </source>
</evidence>
<evidence type="ECO:0000269" key="2">
    <source>
    </source>
</evidence>
<evidence type="ECO:0000269" key="3">
    <source>
    </source>
</evidence>
<evidence type="ECO:0000303" key="4">
    <source>
    </source>
</evidence>
<evidence type="ECO:0000303" key="5">
    <source>
    </source>
</evidence>
<evidence type="ECO:0000303" key="6">
    <source>
    </source>
</evidence>
<evidence type="ECO:0000305" key="7"/>
<accession>Q86TW2</accession>
<accession>B3KUD5</accession>
<accession>Q6PD65</accession>
<accession>Q9UIE6</accession>
<comment type="function">
    <text evidence="2 7">Appears to be essential for maintaining mitochondrial cristae formation and mitochondrial function by acting via YME1L1 in a kinase-independent manner to regulate essential mitochondrial structural proteins OPA1 and IMMT (PubMed:31125351). The action of this enzyme is not yet clear (Probable). It is not known if it has protein kinase activity and what type of substrate it would phosphorylate (Ser, Thr or Tyr) (Probable).</text>
</comment>
<comment type="subcellular location">
    <subcellularLocation>
        <location evidence="3">Mitochondrion</location>
    </subcellularLocation>
</comment>
<comment type="alternative products">
    <event type="alternative splicing"/>
    <isoform>
        <id>Q86TW2-1</id>
        <name>1</name>
        <sequence type="displayed"/>
    </isoform>
    <isoform>
        <id>Q86TW2-2</id>
        <name>2</name>
        <sequence type="described" ref="VSP_020885"/>
    </isoform>
    <isoform>
        <id>Q86TW2-3</id>
        <name>3</name>
        <sequence type="described" ref="VSP_046794"/>
    </isoform>
</comment>
<comment type="similarity">
    <text evidence="7">Belongs to the protein kinase superfamily. ADCK protein kinase family.</text>
</comment>
<comment type="sequence caution" evidence="7">
    <conflict type="erroneous initiation">
        <sequence resource="EMBL-CDS" id="CAD62620"/>
    </conflict>
    <text>Extended N-terminus.</text>
</comment>
<comment type="sequence caution" evidence="7">
    <conflict type="miscellaneous discrepancy">
        <sequence resource="EMBL-CDS" id="CAD62620"/>
    </conflict>
    <text>Aberrant splicing.</text>
</comment>